<comment type="miscellaneous">
    <text evidence="1">Partially overlaps GPM1.</text>
</comment>
<comment type="caution">
    <text evidence="2">Product of a dubious gene prediction unlikely to encode a functional protein. Because of that it is not part of the S.cerevisiae S288c complete/reference proteome set.</text>
</comment>
<name>YKP3_YEAST</name>
<gene>
    <name type="ordered locus">YKL153W</name>
    <name type="ORF">YKL608</name>
</gene>
<organism>
    <name type="scientific">Saccharomyces cerevisiae (strain ATCC 204508 / S288c)</name>
    <name type="common">Baker's yeast</name>
    <dbReference type="NCBI Taxonomy" id="559292"/>
    <lineage>
        <taxon>Eukaryota</taxon>
        <taxon>Fungi</taxon>
        <taxon>Dikarya</taxon>
        <taxon>Ascomycota</taxon>
        <taxon>Saccharomycotina</taxon>
        <taxon>Saccharomycetes</taxon>
        <taxon>Saccharomycetales</taxon>
        <taxon>Saccharomycetaceae</taxon>
        <taxon>Saccharomyces</taxon>
    </lineage>
</organism>
<feature type="chain" id="PRO_0000203145" description="Putative uncharacterized protein YKL153W">
    <location>
        <begin position="1"/>
        <end position="169"/>
    </location>
</feature>
<evidence type="ECO:0000305" key="1"/>
<evidence type="ECO:0000305" key="2">
    <source>
    </source>
</evidence>
<reference key="1">
    <citation type="journal article" date="1994" name="Yeast">
        <title>DNA sequencing of a 36.2 kb fragment located between the FAS1 and LAP loci of chromosome XI of Saccharomyces cerevisiae.</title>
        <authorList>
            <person name="Vandenbol M."/>
            <person name="Bolle P.-A."/>
            <person name="Dion C."/>
            <person name="Portetelle D."/>
            <person name="Hilger F."/>
        </authorList>
    </citation>
    <scope>NUCLEOTIDE SEQUENCE [GENOMIC DNA]</scope>
    <source>
        <strain>ATCC 204508 / S288c</strain>
    </source>
</reference>
<reference key="2">
    <citation type="journal article" date="1994" name="Nature">
        <title>Complete DNA sequence of yeast chromosome XI.</title>
        <authorList>
            <person name="Dujon B."/>
            <person name="Alexandraki D."/>
            <person name="Andre B."/>
            <person name="Ansorge W."/>
            <person name="Baladron V."/>
            <person name="Ballesta J.P.G."/>
            <person name="Banrevi A."/>
            <person name="Bolle P.-A."/>
            <person name="Bolotin-Fukuhara M."/>
            <person name="Bossier P."/>
            <person name="Bou G."/>
            <person name="Boyer J."/>
            <person name="Buitrago M.J."/>
            <person name="Cheret G."/>
            <person name="Colleaux L."/>
            <person name="Daignan-Fornier B."/>
            <person name="del Rey F."/>
            <person name="Dion C."/>
            <person name="Domdey H."/>
            <person name="Duesterhoeft A."/>
            <person name="Duesterhus S."/>
            <person name="Entian K.-D."/>
            <person name="Erfle H."/>
            <person name="Esteban P.F."/>
            <person name="Feldmann H."/>
            <person name="Fernandes L."/>
            <person name="Fobo G.M."/>
            <person name="Fritz C."/>
            <person name="Fukuhara H."/>
            <person name="Gabel C."/>
            <person name="Gaillon L."/>
            <person name="Garcia-Cantalejo J.M."/>
            <person name="Garcia-Ramirez J.J."/>
            <person name="Gent M.E."/>
            <person name="Ghazvini M."/>
            <person name="Goffeau A."/>
            <person name="Gonzalez A."/>
            <person name="Grothues D."/>
            <person name="Guerreiro P."/>
            <person name="Hegemann J.H."/>
            <person name="Hewitt N."/>
            <person name="Hilger F."/>
            <person name="Hollenberg C.P."/>
            <person name="Horaitis O."/>
            <person name="Indge K.J."/>
            <person name="Jacquier A."/>
            <person name="James C.M."/>
            <person name="Jauniaux J.-C."/>
            <person name="Jimenez A."/>
            <person name="Keuchel H."/>
            <person name="Kirchrath L."/>
            <person name="Kleine K."/>
            <person name="Koetter P."/>
            <person name="Legrain P."/>
            <person name="Liebl S."/>
            <person name="Louis E.J."/>
            <person name="Maia e Silva A."/>
            <person name="Marck C."/>
            <person name="Monnier A.-L."/>
            <person name="Moestl D."/>
            <person name="Mueller S."/>
            <person name="Obermaier B."/>
            <person name="Oliver S.G."/>
            <person name="Pallier C."/>
            <person name="Pascolo S."/>
            <person name="Pfeiffer F."/>
            <person name="Philippsen P."/>
            <person name="Planta R.J."/>
            <person name="Pohl F.M."/>
            <person name="Pohl T.M."/>
            <person name="Poehlmann R."/>
            <person name="Portetelle D."/>
            <person name="Purnelle B."/>
            <person name="Puzos V."/>
            <person name="Ramezani Rad M."/>
            <person name="Rasmussen S.W."/>
            <person name="Remacha M.A."/>
            <person name="Revuelta J.L."/>
            <person name="Richard G.-F."/>
            <person name="Rieger M."/>
            <person name="Rodrigues-Pousada C."/>
            <person name="Rose M."/>
            <person name="Rupp T."/>
            <person name="Santos M.A."/>
            <person name="Schwager C."/>
            <person name="Sensen C."/>
            <person name="Skala J."/>
            <person name="Soares H."/>
            <person name="Sor F."/>
            <person name="Stegemann J."/>
            <person name="Tettelin H."/>
            <person name="Thierry A."/>
            <person name="Tzermia M."/>
            <person name="Urrestarazu L.A."/>
            <person name="van Dyck L."/>
            <person name="van Vliet-Reedijk J.C."/>
            <person name="Valens M."/>
            <person name="Vandenbol M."/>
            <person name="Vilela C."/>
            <person name="Vissers S."/>
            <person name="von Wettstein D."/>
            <person name="Voss H."/>
            <person name="Wiemann S."/>
            <person name="Xu G."/>
            <person name="Zimmermann J."/>
            <person name="Haasemann M."/>
            <person name="Becker I."/>
            <person name="Mewes H.-W."/>
        </authorList>
    </citation>
    <scope>NUCLEOTIDE SEQUENCE [LARGE SCALE GENOMIC DNA]</scope>
    <source>
        <strain>ATCC 204508 / S288c</strain>
    </source>
</reference>
<reference key="3">
    <citation type="journal article" date="2014" name="G3 (Bethesda)">
        <title>The reference genome sequence of Saccharomyces cerevisiae: Then and now.</title>
        <authorList>
            <person name="Engel S.R."/>
            <person name="Dietrich F.S."/>
            <person name="Fisk D.G."/>
            <person name="Binkley G."/>
            <person name="Balakrishnan R."/>
            <person name="Costanzo M.C."/>
            <person name="Dwight S.S."/>
            <person name="Hitz B.C."/>
            <person name="Karra K."/>
            <person name="Nash R.S."/>
            <person name="Weng S."/>
            <person name="Wong E.D."/>
            <person name="Lloyd P."/>
            <person name="Skrzypek M.S."/>
            <person name="Miyasato S.R."/>
            <person name="Simison M."/>
            <person name="Cherry J.M."/>
        </authorList>
    </citation>
    <scope>GENOME REANNOTATION</scope>
    <source>
        <strain>ATCC 204508 / S288c</strain>
    </source>
</reference>
<reference key="4">
    <citation type="journal article" date="2007" name="Genome Res.">
        <title>Approaching a complete repository of sequence-verified protein-encoding clones for Saccharomyces cerevisiae.</title>
        <authorList>
            <person name="Hu Y."/>
            <person name="Rolfs A."/>
            <person name="Bhullar B."/>
            <person name="Murthy T.V.S."/>
            <person name="Zhu C."/>
            <person name="Berger M.F."/>
            <person name="Camargo A.A."/>
            <person name="Kelley F."/>
            <person name="McCarron S."/>
            <person name="Jepson D."/>
            <person name="Richardson A."/>
            <person name="Raphael J."/>
            <person name="Moreira D."/>
            <person name="Taycher E."/>
            <person name="Zuo D."/>
            <person name="Mohr S."/>
            <person name="Kane M.F."/>
            <person name="Williamson J."/>
            <person name="Simpson A.J.G."/>
            <person name="Bulyk M.L."/>
            <person name="Harlow E."/>
            <person name="Marsischky G."/>
            <person name="Kolodner R.D."/>
            <person name="LaBaer J."/>
        </authorList>
    </citation>
    <scope>NUCLEOTIDE SEQUENCE [GENOMIC DNA]</scope>
    <source>
        <strain>ATCC 204508 / S288c</strain>
    </source>
</reference>
<proteinExistence type="uncertain"/>
<accession>P36058</accession>
<protein>
    <recommendedName>
        <fullName>Putative uncharacterized protein YKL153W</fullName>
    </recommendedName>
</protein>
<sequence>MEGKRNHQIIHSSDLFLTLVGNSSGTSSGSFWVQVVRWLRWLQVFVQFEDQWNTSWDVQLSNVSIRDTFQVLNQTSQGVTVSGDHDGLTTQQVLGNDILPVWQQSVNDQSQRFSFWQDIWVNVLVSFITLLREWRRSVDWGRWNIEGSSVGVEFFFTELLQSFSLVLTL</sequence>
<dbReference type="EMBL" id="Z26877">
    <property type="protein sequence ID" value="CAA81500.1"/>
    <property type="molecule type" value="Genomic_DNA"/>
</dbReference>
<dbReference type="EMBL" id="Z28152">
    <property type="protein sequence ID" value="CAA81993.1"/>
    <property type="molecule type" value="Genomic_DNA"/>
</dbReference>
<dbReference type="EMBL" id="AY558358">
    <property type="protein sequence ID" value="AAS56684.1"/>
    <property type="molecule type" value="Genomic_DNA"/>
</dbReference>
<dbReference type="PIR" id="S37797">
    <property type="entry name" value="S37797"/>
</dbReference>
<dbReference type="DIP" id="DIP-2857N"/>
<dbReference type="IntAct" id="P36058">
    <property type="interactions" value="2"/>
</dbReference>
<dbReference type="MINT" id="P36058"/>
<dbReference type="STRING" id="4932.YKL153W"/>
<dbReference type="PaxDb" id="4932-YKL153W"/>
<dbReference type="EnsemblFungi" id="YKL153W_mRNA">
    <property type="protein sequence ID" value="YKL153W"/>
    <property type="gene ID" value="YKL153W"/>
</dbReference>
<dbReference type="AGR" id="SGD:S000001636"/>
<dbReference type="SGD" id="S000001636">
    <property type="gene designation" value="YKL153W"/>
</dbReference>
<dbReference type="HOGENOM" id="CLU_1579727_0_0_1"/>